<protein>
    <recommendedName>
        <fullName>Uncharacterized protein C29A10.17</fullName>
    </recommendedName>
</protein>
<sequence>MGNCCSFLFNNSDDIDEQTPLLNNDGIQRTPPSAEADMSLRKREEEEEWESKVYDVAKNKFIDVFSLRLRTEAPQRDPRDNIYEEVLDQIDSLNLDPKYDVAKPTEQETEFIIRKLGVLIDDINNIKLSDKEIKGKMVINLSKVQPNITGSPS</sequence>
<accession>C6Y4C6</accession>
<dbReference type="EMBL" id="CU329671">
    <property type="protein sequence ID" value="CBA11509.2"/>
    <property type="molecule type" value="Genomic_DNA"/>
</dbReference>
<dbReference type="RefSeq" id="XP_002788941.2">
    <property type="nucleotide sequence ID" value="XM_002788895.2"/>
</dbReference>
<dbReference type="PDB" id="8FW5">
    <property type="method" value="EM"/>
    <property type="resolution" value="3.08 A"/>
    <property type="chains" value="F=6-153"/>
</dbReference>
<dbReference type="PDBsum" id="8FW5"/>
<dbReference type="SMR" id="C6Y4C6"/>
<dbReference type="BioGRID" id="1028490">
    <property type="interactions" value="2"/>
</dbReference>
<dbReference type="STRING" id="284812.C6Y4C6"/>
<dbReference type="iPTMnet" id="C6Y4C6"/>
<dbReference type="PaxDb" id="4896-SPBC29A10.17.1"/>
<dbReference type="EnsemblFungi" id="SPBC29A10.17.1">
    <property type="protein sequence ID" value="SPBC29A10.17.1:pep"/>
    <property type="gene ID" value="SPBC29A10.17"/>
</dbReference>
<dbReference type="PomBase" id="SPBC29A10.17"/>
<dbReference type="VEuPathDB" id="FungiDB:SPBC29A10.17"/>
<dbReference type="HOGENOM" id="CLU_1723401_0_0_1"/>
<dbReference type="InParanoid" id="C6Y4C6"/>
<dbReference type="OMA" id="WESKVYD"/>
<dbReference type="PRO" id="PR:C6Y4C6"/>
<dbReference type="Proteomes" id="UP000002485">
    <property type="component" value="Chromosome II"/>
</dbReference>
<dbReference type="GO" id="GO:0000329">
    <property type="term" value="C:fungal-type vacuole membrane"/>
    <property type="evidence" value="ECO:0000314"/>
    <property type="project" value="PomBase"/>
</dbReference>
<dbReference type="GO" id="GO:0071986">
    <property type="term" value="C:Ragulator complex"/>
    <property type="evidence" value="ECO:0000315"/>
    <property type="project" value="PomBase"/>
</dbReference>
<dbReference type="GO" id="GO:1903432">
    <property type="term" value="P:regulation of TORC1 signaling"/>
    <property type="evidence" value="ECO:0000305"/>
    <property type="project" value="PomBase"/>
</dbReference>
<gene>
    <name type="ORF">SPBC29A10.17</name>
</gene>
<name>YGSQ_SCHPO</name>
<organism>
    <name type="scientific">Schizosaccharomyces pombe (strain 972 / ATCC 24843)</name>
    <name type="common">Fission yeast</name>
    <dbReference type="NCBI Taxonomy" id="284812"/>
    <lineage>
        <taxon>Eukaryota</taxon>
        <taxon>Fungi</taxon>
        <taxon>Dikarya</taxon>
        <taxon>Ascomycota</taxon>
        <taxon>Taphrinomycotina</taxon>
        <taxon>Schizosaccharomycetes</taxon>
        <taxon>Schizosaccharomycetales</taxon>
        <taxon>Schizosaccharomycetaceae</taxon>
        <taxon>Schizosaccharomyces</taxon>
    </lineage>
</organism>
<proteinExistence type="evidence at protein level"/>
<keyword id="KW-0002">3D-structure</keyword>
<keyword id="KW-1185">Reference proteome</keyword>
<evidence type="ECO:0000256" key="1">
    <source>
        <dbReference type="SAM" id="MobiDB-lite"/>
    </source>
</evidence>
<evidence type="ECO:0007829" key="2">
    <source>
        <dbReference type="PDB" id="8FW5"/>
    </source>
</evidence>
<feature type="chain" id="PRO_0000389149" description="Uncharacterized protein C29A10.17">
    <location>
        <begin position="1"/>
        <end position="153"/>
    </location>
</feature>
<feature type="region of interest" description="Disordered" evidence="1">
    <location>
        <begin position="16"/>
        <end position="40"/>
    </location>
</feature>
<feature type="compositionally biased region" description="Polar residues" evidence="1">
    <location>
        <begin position="20"/>
        <end position="31"/>
    </location>
</feature>
<feature type="helix" evidence="2">
    <location>
        <begin position="43"/>
        <end position="59"/>
    </location>
</feature>
<feature type="turn" evidence="2">
    <location>
        <begin position="64"/>
        <end position="66"/>
    </location>
</feature>
<feature type="helix" evidence="2">
    <location>
        <begin position="82"/>
        <end position="87"/>
    </location>
</feature>
<feature type="strand" evidence="2">
    <location>
        <begin position="100"/>
        <end position="102"/>
    </location>
</feature>
<feature type="helix" evidence="2">
    <location>
        <begin position="106"/>
        <end position="124"/>
    </location>
</feature>
<reference key="1">
    <citation type="journal article" date="2002" name="Nature">
        <title>The genome sequence of Schizosaccharomyces pombe.</title>
        <authorList>
            <person name="Wood V."/>
            <person name="Gwilliam R."/>
            <person name="Rajandream M.A."/>
            <person name="Lyne M.H."/>
            <person name="Lyne R."/>
            <person name="Stewart A."/>
            <person name="Sgouros J.G."/>
            <person name="Peat N."/>
            <person name="Hayles J."/>
            <person name="Baker S.G."/>
            <person name="Basham D."/>
            <person name="Bowman S."/>
            <person name="Brooks K."/>
            <person name="Brown D."/>
            <person name="Brown S."/>
            <person name="Chillingworth T."/>
            <person name="Churcher C.M."/>
            <person name="Collins M."/>
            <person name="Connor R."/>
            <person name="Cronin A."/>
            <person name="Davis P."/>
            <person name="Feltwell T."/>
            <person name="Fraser A."/>
            <person name="Gentles S."/>
            <person name="Goble A."/>
            <person name="Hamlin N."/>
            <person name="Harris D.E."/>
            <person name="Hidalgo J."/>
            <person name="Hodgson G."/>
            <person name="Holroyd S."/>
            <person name="Hornsby T."/>
            <person name="Howarth S."/>
            <person name="Huckle E.J."/>
            <person name="Hunt S."/>
            <person name="Jagels K."/>
            <person name="James K.D."/>
            <person name="Jones L."/>
            <person name="Jones M."/>
            <person name="Leather S."/>
            <person name="McDonald S."/>
            <person name="McLean J."/>
            <person name="Mooney P."/>
            <person name="Moule S."/>
            <person name="Mungall K.L."/>
            <person name="Murphy L.D."/>
            <person name="Niblett D."/>
            <person name="Odell C."/>
            <person name="Oliver K."/>
            <person name="O'Neil S."/>
            <person name="Pearson D."/>
            <person name="Quail M.A."/>
            <person name="Rabbinowitsch E."/>
            <person name="Rutherford K.M."/>
            <person name="Rutter S."/>
            <person name="Saunders D."/>
            <person name="Seeger K."/>
            <person name="Sharp S."/>
            <person name="Skelton J."/>
            <person name="Simmonds M.N."/>
            <person name="Squares R."/>
            <person name="Squares S."/>
            <person name="Stevens K."/>
            <person name="Taylor K."/>
            <person name="Taylor R.G."/>
            <person name="Tivey A."/>
            <person name="Walsh S.V."/>
            <person name="Warren T."/>
            <person name="Whitehead S."/>
            <person name="Woodward J.R."/>
            <person name="Volckaert G."/>
            <person name="Aert R."/>
            <person name="Robben J."/>
            <person name="Grymonprez B."/>
            <person name="Weltjens I."/>
            <person name="Vanstreels E."/>
            <person name="Rieger M."/>
            <person name="Schaefer M."/>
            <person name="Mueller-Auer S."/>
            <person name="Gabel C."/>
            <person name="Fuchs M."/>
            <person name="Duesterhoeft A."/>
            <person name="Fritzc C."/>
            <person name="Holzer E."/>
            <person name="Moestl D."/>
            <person name="Hilbert H."/>
            <person name="Borzym K."/>
            <person name="Langer I."/>
            <person name="Beck A."/>
            <person name="Lehrach H."/>
            <person name="Reinhardt R."/>
            <person name="Pohl T.M."/>
            <person name="Eger P."/>
            <person name="Zimmermann W."/>
            <person name="Wedler H."/>
            <person name="Wambutt R."/>
            <person name="Purnelle B."/>
            <person name="Goffeau A."/>
            <person name="Cadieu E."/>
            <person name="Dreano S."/>
            <person name="Gloux S."/>
            <person name="Lelaure V."/>
            <person name="Mottier S."/>
            <person name="Galibert F."/>
            <person name="Aves S.J."/>
            <person name="Xiang Z."/>
            <person name="Hunt C."/>
            <person name="Moore K."/>
            <person name="Hurst S.M."/>
            <person name="Lucas M."/>
            <person name="Rochet M."/>
            <person name="Gaillardin C."/>
            <person name="Tallada V.A."/>
            <person name="Garzon A."/>
            <person name="Thode G."/>
            <person name="Daga R.R."/>
            <person name="Cruzado L."/>
            <person name="Jimenez J."/>
            <person name="Sanchez M."/>
            <person name="del Rey F."/>
            <person name="Benito J."/>
            <person name="Dominguez A."/>
            <person name="Revuelta J.L."/>
            <person name="Moreno S."/>
            <person name="Armstrong J."/>
            <person name="Forsburg S.L."/>
            <person name="Cerutti L."/>
            <person name="Lowe T."/>
            <person name="McCombie W.R."/>
            <person name="Paulsen I."/>
            <person name="Potashkin J."/>
            <person name="Shpakovski G.V."/>
            <person name="Ussery D."/>
            <person name="Barrell B.G."/>
            <person name="Nurse P."/>
        </authorList>
    </citation>
    <scope>NUCLEOTIDE SEQUENCE [LARGE SCALE GENOMIC DNA]</scope>
    <source>
        <strain>972 / ATCC 24843</strain>
    </source>
</reference>
<reference key="2">
    <citation type="journal article" date="2011" name="Science">
        <title>Comparative functional genomics of the fission yeasts.</title>
        <authorList>
            <person name="Rhind N."/>
            <person name="Chen Z."/>
            <person name="Yassour M."/>
            <person name="Thompson D.A."/>
            <person name="Haas B.J."/>
            <person name="Habib N."/>
            <person name="Wapinski I."/>
            <person name="Roy S."/>
            <person name="Lin M.F."/>
            <person name="Heiman D.I."/>
            <person name="Young S.K."/>
            <person name="Furuya K."/>
            <person name="Guo Y."/>
            <person name="Pidoux A."/>
            <person name="Chen H.M."/>
            <person name="Robbertse B."/>
            <person name="Goldberg J.M."/>
            <person name="Aoki K."/>
            <person name="Bayne E.H."/>
            <person name="Berlin A.M."/>
            <person name="Desjardins C.A."/>
            <person name="Dobbs E."/>
            <person name="Dukaj L."/>
            <person name="Fan L."/>
            <person name="FitzGerald M.G."/>
            <person name="French C."/>
            <person name="Gujja S."/>
            <person name="Hansen K."/>
            <person name="Keifenheim D."/>
            <person name="Levin J.Z."/>
            <person name="Mosher R.A."/>
            <person name="Mueller C.A."/>
            <person name="Pfiffner J."/>
            <person name="Priest M."/>
            <person name="Russ C."/>
            <person name="Smialowska A."/>
            <person name="Swoboda P."/>
            <person name="Sykes S.M."/>
            <person name="Vaughn M."/>
            <person name="Vengrova S."/>
            <person name="Yoder R."/>
            <person name="Zeng Q."/>
            <person name="Allshire R."/>
            <person name="Baulcombe D."/>
            <person name="Birren B.W."/>
            <person name="Brown W."/>
            <person name="Ekwall K."/>
            <person name="Kellis M."/>
            <person name="Leatherwood J."/>
            <person name="Levin H."/>
            <person name="Margalit H."/>
            <person name="Martienssen R."/>
            <person name="Nieduszynski C.A."/>
            <person name="Spatafora J.W."/>
            <person name="Friedman N."/>
            <person name="Dalgaard J.Z."/>
            <person name="Baumann P."/>
            <person name="Niki H."/>
            <person name="Regev A."/>
            <person name="Nusbaum C."/>
        </authorList>
    </citation>
    <scope>REVISION OF GENE MODEL</scope>
</reference>
<reference key="3">
    <citation type="journal article" date="2008" name="Nature">
        <title>Dynamic repertoire of a eukaryotic transcriptome surveyed at single-nucleotide resolution.</title>
        <authorList>
            <person name="Wilhelm B.T."/>
            <person name="Marguerat S."/>
            <person name="Watt S."/>
            <person name="Schubert F."/>
            <person name="Wood V."/>
            <person name="Goodhead I."/>
            <person name="Penkett C.J."/>
            <person name="Rogers J."/>
            <person name="Baehler J."/>
        </authorList>
    </citation>
    <scope>IDENTIFICATION</scope>
</reference>
<reference key="4">
    <citation type="journal article" date="2011" name="Genetics">
        <title>Augmented annotation of the Schizosaccharomyces pombe genome reveals additional genes required for growth and viability.</title>
        <authorList>
            <person name="Bitton D.A."/>
            <person name="Wood V."/>
            <person name="Scutt P.J."/>
            <person name="Grallert A."/>
            <person name="Yates T."/>
            <person name="Smith D.L."/>
            <person name="Hagan I.M."/>
            <person name="Miller C.J."/>
        </authorList>
    </citation>
    <scope>REVISION OF GENE MODEL</scope>
    <scope>IDENTIFICATION BY MASS SPECTROMETRY</scope>
</reference>